<reference key="1">
    <citation type="submission" date="2008-06" db="EMBL/GenBank/DDBJ databases">
        <title>Complete sequence of Pelodictyon phaeoclathratiforme BU-1.</title>
        <authorList>
            <consortium name="US DOE Joint Genome Institute"/>
            <person name="Lucas S."/>
            <person name="Copeland A."/>
            <person name="Lapidus A."/>
            <person name="Glavina del Rio T."/>
            <person name="Dalin E."/>
            <person name="Tice H."/>
            <person name="Bruce D."/>
            <person name="Goodwin L."/>
            <person name="Pitluck S."/>
            <person name="Schmutz J."/>
            <person name="Larimer F."/>
            <person name="Land M."/>
            <person name="Hauser L."/>
            <person name="Kyrpides N."/>
            <person name="Mikhailova N."/>
            <person name="Liu Z."/>
            <person name="Li T."/>
            <person name="Zhao F."/>
            <person name="Overmann J."/>
            <person name="Bryant D.A."/>
            <person name="Richardson P."/>
        </authorList>
    </citation>
    <scope>NUCLEOTIDE SEQUENCE [LARGE SCALE GENOMIC DNA]</scope>
    <source>
        <strain>DSM 5477 / BU-1</strain>
    </source>
</reference>
<gene>
    <name evidence="1" type="primary">tsf</name>
    <name type="ordered locus">Ppha_2352</name>
</gene>
<sequence>MSQISAKDVKNLRDITGAGMMDCKKALDETGGDMQQAIDYLRKKGAALAAKRADRDAREGMVEIKMTADHKAGIILELNCETDFVARGEDFTNFTVALGELALAKCISSPEALMTLTLGEAYGGETVDDAIKTMTGKLGEKISLKRLVYIDAGDGVVESYVHPGAQLGAIIHLATDQPDAVRELARDLAMQVAAAAPIVVDRSFVPADYIAKEAEIYRQQALEQGKKEAFVDKIVLGRLEKYYQDVVLSEQFFIKDSTVKVSDVLNEFRKKHQVKVDVIGFVRCKLGE</sequence>
<feature type="chain" id="PRO_1000116766" description="Elongation factor Ts">
    <location>
        <begin position="1"/>
        <end position="288"/>
    </location>
</feature>
<feature type="region of interest" description="Involved in Mg(2+) ion dislocation from EF-Tu" evidence="1">
    <location>
        <begin position="82"/>
        <end position="85"/>
    </location>
</feature>
<evidence type="ECO:0000255" key="1">
    <source>
        <dbReference type="HAMAP-Rule" id="MF_00050"/>
    </source>
</evidence>
<dbReference type="EMBL" id="CP001110">
    <property type="protein sequence ID" value="ACF44545.1"/>
    <property type="molecule type" value="Genomic_DNA"/>
</dbReference>
<dbReference type="RefSeq" id="WP_012509019.1">
    <property type="nucleotide sequence ID" value="NC_011060.1"/>
</dbReference>
<dbReference type="SMR" id="B4SEC6"/>
<dbReference type="STRING" id="324925.Ppha_2352"/>
<dbReference type="KEGG" id="pph:Ppha_2352"/>
<dbReference type="eggNOG" id="COG0264">
    <property type="taxonomic scope" value="Bacteria"/>
</dbReference>
<dbReference type="HOGENOM" id="CLU_047155_0_0_10"/>
<dbReference type="OrthoDB" id="9808348at2"/>
<dbReference type="Proteomes" id="UP000002724">
    <property type="component" value="Chromosome"/>
</dbReference>
<dbReference type="GO" id="GO:0005737">
    <property type="term" value="C:cytoplasm"/>
    <property type="evidence" value="ECO:0007669"/>
    <property type="project" value="UniProtKB-SubCell"/>
</dbReference>
<dbReference type="GO" id="GO:0003746">
    <property type="term" value="F:translation elongation factor activity"/>
    <property type="evidence" value="ECO:0007669"/>
    <property type="project" value="UniProtKB-UniRule"/>
</dbReference>
<dbReference type="CDD" id="cd14275">
    <property type="entry name" value="UBA_EF-Ts"/>
    <property type="match status" value="1"/>
</dbReference>
<dbReference type="FunFam" id="1.10.286.20:FF:000001">
    <property type="entry name" value="Elongation factor Ts"/>
    <property type="match status" value="1"/>
</dbReference>
<dbReference type="FunFam" id="1.10.8.10:FF:000001">
    <property type="entry name" value="Elongation factor Ts"/>
    <property type="match status" value="1"/>
</dbReference>
<dbReference type="Gene3D" id="1.10.286.20">
    <property type="match status" value="1"/>
</dbReference>
<dbReference type="Gene3D" id="1.10.8.10">
    <property type="entry name" value="DNA helicase RuvA subunit, C-terminal domain"/>
    <property type="match status" value="1"/>
</dbReference>
<dbReference type="Gene3D" id="3.30.479.20">
    <property type="entry name" value="Elongation factor Ts, dimerisation domain"/>
    <property type="match status" value="2"/>
</dbReference>
<dbReference type="HAMAP" id="MF_00050">
    <property type="entry name" value="EF_Ts"/>
    <property type="match status" value="1"/>
</dbReference>
<dbReference type="InterPro" id="IPR036402">
    <property type="entry name" value="EF-Ts_dimer_sf"/>
</dbReference>
<dbReference type="InterPro" id="IPR001816">
    <property type="entry name" value="Transl_elong_EFTs/EF1B"/>
</dbReference>
<dbReference type="InterPro" id="IPR014039">
    <property type="entry name" value="Transl_elong_EFTs/EF1B_dimer"/>
</dbReference>
<dbReference type="InterPro" id="IPR018101">
    <property type="entry name" value="Transl_elong_Ts_CS"/>
</dbReference>
<dbReference type="InterPro" id="IPR009060">
    <property type="entry name" value="UBA-like_sf"/>
</dbReference>
<dbReference type="NCBIfam" id="TIGR00116">
    <property type="entry name" value="tsf"/>
    <property type="match status" value="1"/>
</dbReference>
<dbReference type="PANTHER" id="PTHR11741">
    <property type="entry name" value="ELONGATION FACTOR TS"/>
    <property type="match status" value="1"/>
</dbReference>
<dbReference type="PANTHER" id="PTHR11741:SF0">
    <property type="entry name" value="ELONGATION FACTOR TS, MITOCHONDRIAL"/>
    <property type="match status" value="1"/>
</dbReference>
<dbReference type="Pfam" id="PF00889">
    <property type="entry name" value="EF_TS"/>
    <property type="match status" value="1"/>
</dbReference>
<dbReference type="SUPFAM" id="SSF54713">
    <property type="entry name" value="Elongation factor Ts (EF-Ts), dimerisation domain"/>
    <property type="match status" value="1"/>
</dbReference>
<dbReference type="SUPFAM" id="SSF46934">
    <property type="entry name" value="UBA-like"/>
    <property type="match status" value="1"/>
</dbReference>
<dbReference type="PROSITE" id="PS01126">
    <property type="entry name" value="EF_TS_1"/>
    <property type="match status" value="1"/>
</dbReference>
<dbReference type="PROSITE" id="PS01127">
    <property type="entry name" value="EF_TS_2"/>
    <property type="match status" value="1"/>
</dbReference>
<name>EFTS_PELPB</name>
<proteinExistence type="inferred from homology"/>
<organism>
    <name type="scientific">Pelodictyon phaeoclathratiforme (strain DSM 5477 / BU-1)</name>
    <dbReference type="NCBI Taxonomy" id="324925"/>
    <lineage>
        <taxon>Bacteria</taxon>
        <taxon>Pseudomonadati</taxon>
        <taxon>Chlorobiota</taxon>
        <taxon>Chlorobiia</taxon>
        <taxon>Chlorobiales</taxon>
        <taxon>Chlorobiaceae</taxon>
        <taxon>Chlorobium/Pelodictyon group</taxon>
        <taxon>Pelodictyon</taxon>
    </lineage>
</organism>
<comment type="function">
    <text evidence="1">Associates with the EF-Tu.GDP complex and induces the exchange of GDP to GTP. It remains bound to the aminoacyl-tRNA.EF-Tu.GTP complex up to the GTP hydrolysis stage on the ribosome.</text>
</comment>
<comment type="subcellular location">
    <subcellularLocation>
        <location evidence="1">Cytoplasm</location>
    </subcellularLocation>
</comment>
<comment type="similarity">
    <text evidence="1">Belongs to the EF-Ts family.</text>
</comment>
<protein>
    <recommendedName>
        <fullName evidence="1">Elongation factor Ts</fullName>
        <shortName evidence="1">EF-Ts</shortName>
    </recommendedName>
</protein>
<keyword id="KW-0963">Cytoplasm</keyword>
<keyword id="KW-0251">Elongation factor</keyword>
<keyword id="KW-0648">Protein biosynthesis</keyword>
<keyword id="KW-1185">Reference proteome</keyword>
<accession>B4SEC6</accession>